<evidence type="ECO:0000255" key="1">
    <source>
        <dbReference type="HAMAP-Rule" id="MF_02075"/>
    </source>
</evidence>
<keyword id="KW-0030">Aminoacyl-tRNA synthetase</keyword>
<keyword id="KW-0067">ATP-binding</keyword>
<keyword id="KW-0963">Cytoplasm</keyword>
<keyword id="KW-0436">Ligase</keyword>
<keyword id="KW-0460">Magnesium</keyword>
<keyword id="KW-0479">Metal-binding</keyword>
<keyword id="KW-0547">Nucleotide-binding</keyword>
<keyword id="KW-0648">Protein biosynthesis</keyword>
<gene>
    <name evidence="1" type="primary">aspS</name>
    <name type="ordered locus">TV1114</name>
    <name type="ORF">TVG1147365</name>
</gene>
<dbReference type="EC" id="6.1.1.12" evidence="1"/>
<dbReference type="EMBL" id="BA000011">
    <property type="protein sequence ID" value="BAB60256.1"/>
    <property type="molecule type" value="Genomic_DNA"/>
</dbReference>
<dbReference type="RefSeq" id="WP_010917348.1">
    <property type="nucleotide sequence ID" value="NC_002689.2"/>
</dbReference>
<dbReference type="SMR" id="Q979P6"/>
<dbReference type="STRING" id="273116.gene:9381913"/>
<dbReference type="PaxDb" id="273116-14325352"/>
<dbReference type="GeneID" id="1441230"/>
<dbReference type="KEGG" id="tvo:TVG1147365"/>
<dbReference type="eggNOG" id="arCOG00406">
    <property type="taxonomic scope" value="Archaea"/>
</dbReference>
<dbReference type="HOGENOM" id="CLU_004553_2_1_2"/>
<dbReference type="OrthoDB" id="5908at2157"/>
<dbReference type="PhylomeDB" id="Q979P6"/>
<dbReference type="Proteomes" id="UP000001017">
    <property type="component" value="Chromosome"/>
</dbReference>
<dbReference type="GO" id="GO:0017101">
    <property type="term" value="C:aminoacyl-tRNA synthetase multienzyme complex"/>
    <property type="evidence" value="ECO:0007669"/>
    <property type="project" value="TreeGrafter"/>
</dbReference>
<dbReference type="GO" id="GO:0005829">
    <property type="term" value="C:cytosol"/>
    <property type="evidence" value="ECO:0007669"/>
    <property type="project" value="TreeGrafter"/>
</dbReference>
<dbReference type="GO" id="GO:0004815">
    <property type="term" value="F:aspartate-tRNA ligase activity"/>
    <property type="evidence" value="ECO:0007669"/>
    <property type="project" value="UniProtKB-UniRule"/>
</dbReference>
<dbReference type="GO" id="GO:0005524">
    <property type="term" value="F:ATP binding"/>
    <property type="evidence" value="ECO:0007669"/>
    <property type="project" value="UniProtKB-UniRule"/>
</dbReference>
<dbReference type="GO" id="GO:0000287">
    <property type="term" value="F:magnesium ion binding"/>
    <property type="evidence" value="ECO:0007669"/>
    <property type="project" value="UniProtKB-UniRule"/>
</dbReference>
<dbReference type="GO" id="GO:0003723">
    <property type="term" value="F:RNA binding"/>
    <property type="evidence" value="ECO:0007669"/>
    <property type="project" value="TreeGrafter"/>
</dbReference>
<dbReference type="GO" id="GO:0006422">
    <property type="term" value="P:aspartyl-tRNA aminoacylation"/>
    <property type="evidence" value="ECO:0007669"/>
    <property type="project" value="UniProtKB-UniRule"/>
</dbReference>
<dbReference type="CDD" id="cd00776">
    <property type="entry name" value="AsxRS_core"/>
    <property type="match status" value="1"/>
</dbReference>
<dbReference type="FunFam" id="3.30.930.10:FF:000038">
    <property type="entry name" value="Aspartate--tRNA ligase"/>
    <property type="match status" value="1"/>
</dbReference>
<dbReference type="Gene3D" id="3.30.930.10">
    <property type="entry name" value="Bira Bifunctional Protein, Domain 2"/>
    <property type="match status" value="1"/>
</dbReference>
<dbReference type="Gene3D" id="2.40.50.140">
    <property type="entry name" value="Nucleic acid-binding proteins"/>
    <property type="match status" value="1"/>
</dbReference>
<dbReference type="HAMAP" id="MF_02075">
    <property type="entry name" value="Asp_tRNA_synth_type2"/>
    <property type="match status" value="1"/>
</dbReference>
<dbReference type="InterPro" id="IPR004364">
    <property type="entry name" value="Aa-tRNA-synt_II"/>
</dbReference>
<dbReference type="InterPro" id="IPR006195">
    <property type="entry name" value="aa-tRNA-synth_II"/>
</dbReference>
<dbReference type="InterPro" id="IPR045864">
    <property type="entry name" value="aa-tRNA-synth_II/BPL/LPL"/>
</dbReference>
<dbReference type="InterPro" id="IPR004523">
    <property type="entry name" value="Asp-tRNA_synthase_2"/>
</dbReference>
<dbReference type="InterPro" id="IPR002312">
    <property type="entry name" value="Asp/Asn-tRNA-synth_IIb"/>
</dbReference>
<dbReference type="InterPro" id="IPR012340">
    <property type="entry name" value="NA-bd_OB-fold"/>
</dbReference>
<dbReference type="InterPro" id="IPR004365">
    <property type="entry name" value="NA-bd_OB_tRNA"/>
</dbReference>
<dbReference type="NCBIfam" id="TIGR00458">
    <property type="entry name" value="aspS_nondisc"/>
    <property type="match status" value="1"/>
</dbReference>
<dbReference type="NCBIfam" id="NF003483">
    <property type="entry name" value="PRK05159.1"/>
    <property type="match status" value="1"/>
</dbReference>
<dbReference type="PANTHER" id="PTHR43450:SF1">
    <property type="entry name" value="ASPARTATE--TRNA LIGASE, CYTOPLASMIC"/>
    <property type="match status" value="1"/>
</dbReference>
<dbReference type="PANTHER" id="PTHR43450">
    <property type="entry name" value="ASPARTYL-TRNA SYNTHETASE"/>
    <property type="match status" value="1"/>
</dbReference>
<dbReference type="Pfam" id="PF00152">
    <property type="entry name" value="tRNA-synt_2"/>
    <property type="match status" value="1"/>
</dbReference>
<dbReference type="Pfam" id="PF01336">
    <property type="entry name" value="tRNA_anti-codon"/>
    <property type="match status" value="1"/>
</dbReference>
<dbReference type="PRINTS" id="PR01042">
    <property type="entry name" value="TRNASYNTHASP"/>
</dbReference>
<dbReference type="SUPFAM" id="SSF55681">
    <property type="entry name" value="Class II aaRS and biotin synthetases"/>
    <property type="match status" value="1"/>
</dbReference>
<dbReference type="SUPFAM" id="SSF50249">
    <property type="entry name" value="Nucleic acid-binding proteins"/>
    <property type="match status" value="1"/>
</dbReference>
<dbReference type="PROSITE" id="PS50862">
    <property type="entry name" value="AA_TRNA_LIGASE_II"/>
    <property type="match status" value="1"/>
</dbReference>
<organism>
    <name type="scientific">Thermoplasma volcanium (strain ATCC 51530 / DSM 4299 / JCM 9571 / NBRC 15438 / GSS1)</name>
    <dbReference type="NCBI Taxonomy" id="273116"/>
    <lineage>
        <taxon>Archaea</taxon>
        <taxon>Methanobacteriati</taxon>
        <taxon>Thermoplasmatota</taxon>
        <taxon>Thermoplasmata</taxon>
        <taxon>Thermoplasmatales</taxon>
        <taxon>Thermoplasmataceae</taxon>
        <taxon>Thermoplasma</taxon>
    </lineage>
</organism>
<name>SYD_THEVO</name>
<reference key="1">
    <citation type="journal article" date="2000" name="Proc. Natl. Acad. Sci. U.S.A.">
        <title>Archaeal adaptation to higher temperatures revealed by genomic sequence of Thermoplasma volcanium.</title>
        <authorList>
            <person name="Kawashima T."/>
            <person name="Amano N."/>
            <person name="Koike H."/>
            <person name="Makino S."/>
            <person name="Higuchi S."/>
            <person name="Kawashima-Ohya Y."/>
            <person name="Watanabe K."/>
            <person name="Yamazaki M."/>
            <person name="Kanehori K."/>
            <person name="Kawamoto T."/>
            <person name="Nunoshiba T."/>
            <person name="Yamamoto Y."/>
            <person name="Aramaki H."/>
            <person name="Makino K."/>
            <person name="Suzuki M."/>
        </authorList>
    </citation>
    <scope>NUCLEOTIDE SEQUENCE [LARGE SCALE GENOMIC DNA]</scope>
    <source>
        <strain>ATCC 51530 / DSM 4299 / JCM 9571 / NBRC 15438 / GSS1</strain>
    </source>
</reference>
<sequence>MPRVYIGSLRELNHNDNVEIYGWLQDLKLLKNVSFLIMRDRTGTVQVTFKNTPDIVNLLKELPRESVLKISGKINKKSVSKSGLEVSGESVEVLNRSERPLPLPVIDPVQADLETRLNNRFIDLRKRDVSSIFNAESSILWGIREFLHSQGFIEVHTPKIVAAATEGGADLFPVKYFENDAYLNQSPQLYKEILMSSGFEKVFEVGPAFRAEEHNTTRHLNEFTSIDIEMSFADHNDAMRILENAVKSGIENMINENGKDLQENGINISIPEIPFPRITYKECIKLLEKEGLEFQFGNDFSPEELRIIGRNFKDFYFITEWPSSLRPFYTMPNRDDPTITNSFDLQYREVEVTSGAQRVHDPDLLLKRFNEKKLNIDSFKFYIQAFKYGMPPHAGWGLGLERLTMIVLGLNNIRETTLFPRDRTRIIP</sequence>
<accession>Q979P6</accession>
<comment type="function">
    <text evidence="1">Catalyzes the attachment of L-aspartate to tRNA(Asp) in a two-step reaction: L-aspartate is first activated by ATP to form Asp-AMP and then transferred to the acceptor end of tRNA(Asp).</text>
</comment>
<comment type="catalytic activity">
    <reaction evidence="1">
        <text>tRNA(Asp) + L-aspartate + ATP = L-aspartyl-tRNA(Asp) + AMP + diphosphate</text>
        <dbReference type="Rhea" id="RHEA:19649"/>
        <dbReference type="Rhea" id="RHEA-COMP:9660"/>
        <dbReference type="Rhea" id="RHEA-COMP:9678"/>
        <dbReference type="ChEBI" id="CHEBI:29991"/>
        <dbReference type="ChEBI" id="CHEBI:30616"/>
        <dbReference type="ChEBI" id="CHEBI:33019"/>
        <dbReference type="ChEBI" id="CHEBI:78442"/>
        <dbReference type="ChEBI" id="CHEBI:78516"/>
        <dbReference type="ChEBI" id="CHEBI:456215"/>
        <dbReference type="EC" id="6.1.1.12"/>
    </reaction>
</comment>
<comment type="cofactor">
    <cofactor evidence="1">
        <name>Mg(2+)</name>
        <dbReference type="ChEBI" id="CHEBI:18420"/>
    </cofactor>
    <text evidence="1">Binds 3 Mg(2+) cations per subunit. The strongest magnesium site (Mg1) is bound to the beta- and gamma-phosphates of ATP and four water molecules complete its coordination sphere.</text>
</comment>
<comment type="subunit">
    <text evidence="1">Homodimer.</text>
</comment>
<comment type="subcellular location">
    <subcellularLocation>
        <location evidence="1">Cytoplasm</location>
    </subcellularLocation>
</comment>
<comment type="similarity">
    <text evidence="1">Belongs to the class-II aminoacyl-tRNA synthetase family. Type 2 subfamily.</text>
</comment>
<protein>
    <recommendedName>
        <fullName evidence="1">Aspartate--tRNA(Asp) ligase</fullName>
        <ecNumber evidence="1">6.1.1.12</ecNumber>
    </recommendedName>
    <alternativeName>
        <fullName evidence="1">Aspartyl-tRNA synthetase</fullName>
        <shortName evidence="1">AspRS</shortName>
    </alternativeName>
    <alternativeName>
        <fullName evidence="1">Discriminating aspartyl-tRNA synthetase</fullName>
        <shortName evidence="1">D-AspRS</shortName>
    </alternativeName>
</protein>
<feature type="chain" id="PRO_0000111009" description="Aspartate--tRNA(Asp) ligase">
    <location>
        <begin position="1"/>
        <end position="428"/>
    </location>
</feature>
<feature type="region of interest" description="Aspartate" evidence="1">
    <location>
        <begin position="188"/>
        <end position="191"/>
    </location>
</feature>
<feature type="binding site" evidence="1">
    <location>
        <position position="166"/>
    </location>
    <ligand>
        <name>L-aspartate</name>
        <dbReference type="ChEBI" id="CHEBI:29991"/>
    </ligand>
</feature>
<feature type="binding site" evidence="1">
    <location>
        <begin position="210"/>
        <end position="212"/>
    </location>
    <ligand>
        <name>ATP</name>
        <dbReference type="ChEBI" id="CHEBI:30616"/>
    </ligand>
</feature>
<feature type="binding site" evidence="1">
    <location>
        <position position="210"/>
    </location>
    <ligand>
        <name>L-aspartate</name>
        <dbReference type="ChEBI" id="CHEBI:29991"/>
    </ligand>
</feature>
<feature type="binding site" evidence="1">
    <location>
        <begin position="218"/>
        <end position="220"/>
    </location>
    <ligand>
        <name>ATP</name>
        <dbReference type="ChEBI" id="CHEBI:30616"/>
    </ligand>
</feature>
<feature type="binding site" evidence="1">
    <location>
        <position position="351"/>
    </location>
    <ligand>
        <name>ATP</name>
        <dbReference type="ChEBI" id="CHEBI:30616"/>
    </ligand>
</feature>
<feature type="binding site" evidence="1">
    <location>
        <position position="351"/>
    </location>
    <ligand>
        <name>Mg(2+)</name>
        <dbReference type="ChEBI" id="CHEBI:18420"/>
        <label>2</label>
    </ligand>
</feature>
<feature type="binding site" evidence="1">
    <location>
        <position position="351"/>
    </location>
    <ligand>
        <name>Mg(2+)</name>
        <dbReference type="ChEBI" id="CHEBI:18420"/>
        <label>3</label>
    </ligand>
</feature>
<feature type="binding site" evidence="1">
    <location>
        <position position="354"/>
    </location>
    <ligand>
        <name>L-aspartate</name>
        <dbReference type="ChEBI" id="CHEBI:29991"/>
    </ligand>
</feature>
<feature type="binding site" evidence="1">
    <location>
        <position position="354"/>
    </location>
    <ligand>
        <name>Mg(2+)</name>
        <dbReference type="ChEBI" id="CHEBI:18420"/>
        <label>2</label>
    </ligand>
</feature>
<feature type="binding site" evidence="1">
    <location>
        <position position="358"/>
    </location>
    <ligand>
        <name>L-aspartate</name>
        <dbReference type="ChEBI" id="CHEBI:29991"/>
    </ligand>
</feature>
<feature type="binding site" evidence="1">
    <location>
        <begin position="399"/>
        <end position="402"/>
    </location>
    <ligand>
        <name>ATP</name>
        <dbReference type="ChEBI" id="CHEBI:30616"/>
    </ligand>
</feature>
<feature type="site" description="Important for tRNA discrimination" evidence="1">
    <location>
        <position position="81"/>
    </location>
</feature>
<proteinExistence type="inferred from homology"/>